<dbReference type="EC" id="3.4.22.70" evidence="6"/>
<dbReference type="EMBL" id="AL939118">
    <property type="protein sequence ID" value="CAB45216.1"/>
    <property type="molecule type" value="Genomic_DNA"/>
</dbReference>
<dbReference type="PIR" id="T36718">
    <property type="entry name" value="T36718"/>
</dbReference>
<dbReference type="RefSeq" id="NP_628037.1">
    <property type="nucleotide sequence ID" value="NC_003888.3"/>
</dbReference>
<dbReference type="RefSeq" id="WP_003975085.1">
    <property type="nucleotide sequence ID" value="NZ_VNID01000003.1"/>
</dbReference>
<dbReference type="SMR" id="Q9XA15"/>
<dbReference type="STRING" id="100226.gene:17761474"/>
<dbReference type="PaxDb" id="100226-SCO3849"/>
<dbReference type="KEGG" id="sco:SCO3849"/>
<dbReference type="PATRIC" id="fig|100226.15.peg.3920"/>
<dbReference type="eggNOG" id="COG3764">
    <property type="taxonomic scope" value="Bacteria"/>
</dbReference>
<dbReference type="HOGENOM" id="CLU_045680_5_2_11"/>
<dbReference type="InParanoid" id="Q9XA15"/>
<dbReference type="OrthoDB" id="5242879at2"/>
<dbReference type="PhylomeDB" id="Q9XA15"/>
<dbReference type="Proteomes" id="UP000001973">
    <property type="component" value="Chromosome"/>
</dbReference>
<dbReference type="GO" id="GO:0005886">
    <property type="term" value="C:plasma membrane"/>
    <property type="evidence" value="ECO:0007669"/>
    <property type="project" value="UniProtKB-SubCell"/>
</dbReference>
<dbReference type="GO" id="GO:0008233">
    <property type="term" value="F:peptidase activity"/>
    <property type="evidence" value="ECO:0007669"/>
    <property type="project" value="UniProtKB-KW"/>
</dbReference>
<dbReference type="GO" id="GO:0006508">
    <property type="term" value="P:proteolysis"/>
    <property type="evidence" value="ECO:0007669"/>
    <property type="project" value="UniProtKB-KW"/>
</dbReference>
<dbReference type="CDD" id="cd05830">
    <property type="entry name" value="Sortase_E"/>
    <property type="match status" value="1"/>
</dbReference>
<dbReference type="Gene3D" id="2.40.260.10">
    <property type="entry name" value="Sortase"/>
    <property type="match status" value="1"/>
</dbReference>
<dbReference type="InterPro" id="IPR005754">
    <property type="entry name" value="Sortase"/>
</dbReference>
<dbReference type="InterPro" id="IPR053465">
    <property type="entry name" value="Sortase_Class_E"/>
</dbReference>
<dbReference type="InterPro" id="IPR023365">
    <property type="entry name" value="Sortase_dom-sf"/>
</dbReference>
<dbReference type="InterPro" id="IPR042003">
    <property type="entry name" value="Sortase_E"/>
</dbReference>
<dbReference type="NCBIfam" id="NF033747">
    <property type="entry name" value="class_E_sortase"/>
    <property type="match status" value="1"/>
</dbReference>
<dbReference type="NCBIfam" id="TIGR01076">
    <property type="entry name" value="sortase_fam"/>
    <property type="match status" value="1"/>
</dbReference>
<dbReference type="Pfam" id="PF04203">
    <property type="entry name" value="Sortase"/>
    <property type="match status" value="1"/>
</dbReference>
<dbReference type="SUPFAM" id="SSF63817">
    <property type="entry name" value="Sortase"/>
    <property type="match status" value="1"/>
</dbReference>
<gene>
    <name evidence="4" type="primary">srtE2</name>
    <name type="ordered locus">SCO3849</name>
</gene>
<feature type="chain" id="PRO_0000445192" description="Sortase SrtE2">
    <location>
        <begin position="1"/>
        <end position="253"/>
    </location>
</feature>
<feature type="transmembrane region" description="Helical" evidence="1">
    <location>
        <begin position="30"/>
        <end position="50"/>
    </location>
</feature>
<feature type="region of interest" description="Disordered" evidence="2">
    <location>
        <begin position="1"/>
        <end position="23"/>
    </location>
</feature>
<feature type="region of interest" description="Disordered" evidence="2">
    <location>
        <begin position="69"/>
        <end position="89"/>
    </location>
</feature>
<feature type="compositionally biased region" description="Basic and acidic residues" evidence="2">
    <location>
        <begin position="1"/>
        <end position="11"/>
    </location>
</feature>
<feature type="active site" evidence="6">
    <location>
        <position position="220"/>
    </location>
</feature>
<feature type="mutagenesis site" description="Inactive, does not complement a double srtE1-srtE2 knockout. Significantly reduced in vitro peptide cleavage activity." evidence="3">
    <original>C</original>
    <variation>A</variation>
    <location>
        <position position="220"/>
    </location>
</feature>
<proteinExistence type="evidence at protein level"/>
<reference key="1">
    <citation type="journal article" date="2002" name="Nature">
        <title>Complete genome sequence of the model actinomycete Streptomyces coelicolor A3(2).</title>
        <authorList>
            <person name="Bentley S.D."/>
            <person name="Chater K.F."/>
            <person name="Cerdeno-Tarraga A.-M."/>
            <person name="Challis G.L."/>
            <person name="Thomson N.R."/>
            <person name="James K.D."/>
            <person name="Harris D.E."/>
            <person name="Quail M.A."/>
            <person name="Kieser H."/>
            <person name="Harper D."/>
            <person name="Bateman A."/>
            <person name="Brown S."/>
            <person name="Chandra G."/>
            <person name="Chen C.W."/>
            <person name="Collins M."/>
            <person name="Cronin A."/>
            <person name="Fraser A."/>
            <person name="Goble A."/>
            <person name="Hidalgo J."/>
            <person name="Hornsby T."/>
            <person name="Howarth S."/>
            <person name="Huang C.-H."/>
            <person name="Kieser T."/>
            <person name="Larke L."/>
            <person name="Murphy L.D."/>
            <person name="Oliver K."/>
            <person name="O'Neil S."/>
            <person name="Rabbinowitsch E."/>
            <person name="Rajandream M.A."/>
            <person name="Rutherford K.M."/>
            <person name="Rutter S."/>
            <person name="Seeger K."/>
            <person name="Saunders D."/>
            <person name="Sharp S."/>
            <person name="Squares R."/>
            <person name="Squares S."/>
            <person name="Taylor K."/>
            <person name="Warren T."/>
            <person name="Wietzorrek A."/>
            <person name="Woodward J.R."/>
            <person name="Barrell B.G."/>
            <person name="Parkhill J."/>
            <person name="Hopwood D.A."/>
        </authorList>
    </citation>
    <scope>NUCLEOTIDE SEQUENCE [LARGE SCALE GENOMIC DNA]</scope>
    <source>
        <strain>ATCC BAA-471 / A3(2) / M145</strain>
    </source>
</reference>
<reference key="2">
    <citation type="journal article" date="2012" name="Mol. Microbiol.">
        <title>Aerial development in Streptomyces coelicolor requires sortase activity.</title>
        <authorList>
            <person name="Duong A."/>
            <person name="Capstick D.S."/>
            <person name="Di Berardo C."/>
            <person name="Findlay K.C."/>
            <person name="Hesketh A."/>
            <person name="Hong H.J."/>
            <person name="Elliot M.A."/>
        </authorList>
    </citation>
    <scope>FUNCTION</scope>
    <scope>CATALYTIC ACTIVITY</scope>
    <scope>INDUCTION</scope>
    <scope>DISRUPTION PHENOTYPE</scope>
    <scope>MUTAGENESIS OF CYS-220</scope>
    <source>
        <strain>A3(2) / M600</strain>
    </source>
</reference>
<accession>Q9XA15</accession>
<protein>
    <recommendedName>
        <fullName evidence="4">Sortase SrtE2</fullName>
        <ecNumber evidence="6">3.4.22.70</ecNumber>
    </recommendedName>
</protein>
<keyword id="KW-1003">Cell membrane</keyword>
<keyword id="KW-0378">Hydrolase</keyword>
<keyword id="KW-0472">Membrane</keyword>
<keyword id="KW-0645">Protease</keyword>
<keyword id="KW-1185">Reference proteome</keyword>
<keyword id="KW-0812">Transmembrane</keyword>
<keyword id="KW-1133">Transmembrane helix</keyword>
<name>SRTE2_STRCO</name>
<evidence type="ECO:0000255" key="1"/>
<evidence type="ECO:0000256" key="2">
    <source>
        <dbReference type="SAM" id="MobiDB-lite"/>
    </source>
</evidence>
<evidence type="ECO:0000269" key="3">
    <source>
    </source>
</evidence>
<evidence type="ECO:0000303" key="4">
    <source>
    </source>
</evidence>
<evidence type="ECO:0000305" key="5"/>
<evidence type="ECO:0000305" key="6">
    <source>
    </source>
</evidence>
<sequence>MAATTDTEHQEQAGTGGRGRRRPGRIAAQAVSVLGELLITAGLVMGLFVVYSLWWTNVVADRAADKQAEKVRDDWAQDRVGGSGQDGPGALDTKAGIGFLHVPAMSEGDILVEKGTSMKILNDGVAGYYTDPVKATLPTSDEKGNFSLAAHRDGHGARFHNIDKIEKGDPIVFETKDTWYVYKTYAVLPETSKYNVEVLGGIPKESGKKKAGHYITLTTCTPVYTSRYRYVVWGELVRTEKVDGDRTPPKELR</sequence>
<organism>
    <name type="scientific">Streptomyces coelicolor (strain ATCC BAA-471 / A3(2) / M145)</name>
    <dbReference type="NCBI Taxonomy" id="100226"/>
    <lineage>
        <taxon>Bacteria</taxon>
        <taxon>Bacillati</taxon>
        <taxon>Actinomycetota</taxon>
        <taxon>Actinomycetes</taxon>
        <taxon>Kitasatosporales</taxon>
        <taxon>Streptomycetaceae</taxon>
        <taxon>Streptomyces</taxon>
        <taxon>Streptomyces albidoflavus group</taxon>
    </lineage>
</organism>
<comment type="function">
    <text evidence="3">Transpeptidase that anchors surface proteins to the cell wall. Recognizes Leu-Ala-x-Thr-Gly and Leu-Pro-x-Thr-Gly, with a preference for the former. Unlike the S.aureus sortase it cleaves not only the Thr-Gly motif but also the Ala-X bond; an Ala-Glu bond is a better substrate than the Thr-Gly motif in vitro. Among its possible substrates are the chaplins ChpA, ChpB and ChpC; this enzyme is more important for ChpC attachment than is SrtE1. A double knockout mutant of srtE1 and srtE2 shows a developmental defect in aerial hyphae formation more dramatic than that due to chaplin deletion.</text>
</comment>
<comment type="catalytic activity">
    <reaction evidence="6">
        <text>The enzyme catalyzes a cell wall sorting reaction in which a surface protein with a sorting signal containing a LPXTG motif is cleaved between the Thr and Gly residue. The resulting threonine carboxyl end of the protein is covalently attached to a pentaglycine cross-bridge of peptidoglycan.</text>
        <dbReference type="EC" id="3.4.22.70"/>
    </reaction>
</comment>
<comment type="subcellular location">
    <subcellularLocation>
        <location evidence="1">Cell membrane</location>
        <topology evidence="1">Single-pass membrane protein</topology>
    </subcellularLocation>
</comment>
<comment type="induction">
    <text evidence="3">Transcribed independently of the operon's upstream, overlapping gene (SCO3851); transcribed with srtE1 over the first 72 hours of growth. Part of the strE1-srtE2 operon.</text>
</comment>
<comment type="disruption phenotype">
    <text evidence="3">No visible growth phenotype for the single srtE2 deletion, but considerably less ChpC is attached to the cell wall. A double srtE1-srtE2 knockout grown on minimal medium has a more severe delay in aerial hyphae formation than a single srtE1 knockout and does not make spores, on rich medium the double knockout initiates aerial hyphae formation later than wild-type and does not make spores. In the double mutant no ChpC is attached to the cell wall in liquid medium, on minimal medium chpD, chpF (SCO2699), rdlA and nepA are transcribed poorly or not at all (with no change in chpH), while very few spore chains or rodlets are seen on the aerial hyphae.</text>
</comment>
<comment type="similarity">
    <text evidence="5">Belongs to the bacterial sortase family. Class E subfamily.</text>
</comment>